<organism>
    <name type="scientific">Salmonella gallinarum (strain 287/91 / NCTC 13346)</name>
    <dbReference type="NCBI Taxonomy" id="550538"/>
    <lineage>
        <taxon>Bacteria</taxon>
        <taxon>Pseudomonadati</taxon>
        <taxon>Pseudomonadota</taxon>
        <taxon>Gammaproteobacteria</taxon>
        <taxon>Enterobacterales</taxon>
        <taxon>Enterobacteriaceae</taxon>
        <taxon>Salmonella</taxon>
    </lineage>
</organism>
<proteinExistence type="inferred from homology"/>
<gene>
    <name evidence="1" type="primary">nagB</name>
    <name type="ordered locus">SG0681</name>
</gene>
<sequence length="266" mass="29632">MRLIPLSTAEQVGKWAARHIVNRINAFKPTADRPFVLGLPTGGTPLTAYKALVEMHKAGEVSFKHVVTFNMDEYVGLPKEHPESYHSFMHRNFFDHVDIPAENINLLNGNAPDIDAECRQYEEKIRSYGKIHLFMGGVGNDGHIAFNEPASSLASRTRIKTLTHDTRVANSRFFDGDVNQVPKYALTVGVGTLLDAEEVMILVLGHQKAQALQAAVEGNVNHMWTISCLQLHPKAVVVCDEPSTMELKVKTLKYFNELEAENIKGL</sequence>
<protein>
    <recommendedName>
        <fullName evidence="1">Glucosamine-6-phosphate deaminase</fullName>
        <ecNumber evidence="1">3.5.99.6</ecNumber>
    </recommendedName>
    <alternativeName>
        <fullName evidence="1">GlcN6P deaminase</fullName>
        <shortName evidence="1">GNPDA</shortName>
    </alternativeName>
    <alternativeName>
        <fullName evidence="1">Glucosamine-6-phosphate isomerase</fullName>
    </alternativeName>
</protein>
<dbReference type="EC" id="3.5.99.6" evidence="1"/>
<dbReference type="EMBL" id="AM933173">
    <property type="protein sequence ID" value="CAR36577.1"/>
    <property type="molecule type" value="Genomic_DNA"/>
</dbReference>
<dbReference type="RefSeq" id="WP_001237059.1">
    <property type="nucleotide sequence ID" value="NC_011274.1"/>
</dbReference>
<dbReference type="SMR" id="B5R824"/>
<dbReference type="KEGG" id="seg:SG0681"/>
<dbReference type="HOGENOM" id="CLU_049611_0_1_6"/>
<dbReference type="UniPathway" id="UPA00629">
    <property type="reaction ID" value="UER00684"/>
</dbReference>
<dbReference type="Proteomes" id="UP000008321">
    <property type="component" value="Chromosome"/>
</dbReference>
<dbReference type="GO" id="GO:0005737">
    <property type="term" value="C:cytoplasm"/>
    <property type="evidence" value="ECO:0007669"/>
    <property type="project" value="TreeGrafter"/>
</dbReference>
<dbReference type="GO" id="GO:0004342">
    <property type="term" value="F:glucosamine-6-phosphate deaminase activity"/>
    <property type="evidence" value="ECO:0007669"/>
    <property type="project" value="UniProtKB-UniRule"/>
</dbReference>
<dbReference type="GO" id="GO:0042802">
    <property type="term" value="F:identical protein binding"/>
    <property type="evidence" value="ECO:0007669"/>
    <property type="project" value="TreeGrafter"/>
</dbReference>
<dbReference type="GO" id="GO:0005975">
    <property type="term" value="P:carbohydrate metabolic process"/>
    <property type="evidence" value="ECO:0007669"/>
    <property type="project" value="InterPro"/>
</dbReference>
<dbReference type="GO" id="GO:0006043">
    <property type="term" value="P:glucosamine catabolic process"/>
    <property type="evidence" value="ECO:0007669"/>
    <property type="project" value="TreeGrafter"/>
</dbReference>
<dbReference type="GO" id="GO:0006046">
    <property type="term" value="P:N-acetylglucosamine catabolic process"/>
    <property type="evidence" value="ECO:0007669"/>
    <property type="project" value="TreeGrafter"/>
</dbReference>
<dbReference type="GO" id="GO:0019262">
    <property type="term" value="P:N-acetylneuraminate catabolic process"/>
    <property type="evidence" value="ECO:0007669"/>
    <property type="project" value="UniProtKB-UniRule"/>
</dbReference>
<dbReference type="CDD" id="cd01399">
    <property type="entry name" value="GlcN6P_deaminase"/>
    <property type="match status" value="1"/>
</dbReference>
<dbReference type="FunFam" id="3.40.50.1360:FF:000002">
    <property type="entry name" value="Glucosamine-6-phosphate deaminase"/>
    <property type="match status" value="1"/>
</dbReference>
<dbReference type="Gene3D" id="3.40.50.1360">
    <property type="match status" value="1"/>
</dbReference>
<dbReference type="HAMAP" id="MF_01241">
    <property type="entry name" value="GlcN6P_deamin"/>
    <property type="match status" value="1"/>
</dbReference>
<dbReference type="InterPro" id="IPR006148">
    <property type="entry name" value="Glc/Gal-6P_isomerase"/>
</dbReference>
<dbReference type="InterPro" id="IPR004547">
    <property type="entry name" value="Glucosamine6P_isomerase"/>
</dbReference>
<dbReference type="InterPro" id="IPR018321">
    <property type="entry name" value="Glucosamine6P_isomerase_CS"/>
</dbReference>
<dbReference type="InterPro" id="IPR037171">
    <property type="entry name" value="NagB/RpiA_transferase-like"/>
</dbReference>
<dbReference type="NCBIfam" id="TIGR00502">
    <property type="entry name" value="nagB"/>
    <property type="match status" value="1"/>
</dbReference>
<dbReference type="NCBIfam" id="NF001685">
    <property type="entry name" value="PRK00443.1-5"/>
    <property type="match status" value="1"/>
</dbReference>
<dbReference type="PANTHER" id="PTHR11280">
    <property type="entry name" value="GLUCOSAMINE-6-PHOSPHATE ISOMERASE"/>
    <property type="match status" value="1"/>
</dbReference>
<dbReference type="PANTHER" id="PTHR11280:SF5">
    <property type="entry name" value="GLUCOSAMINE-6-PHOSPHATE ISOMERASE"/>
    <property type="match status" value="1"/>
</dbReference>
<dbReference type="Pfam" id="PF01182">
    <property type="entry name" value="Glucosamine_iso"/>
    <property type="match status" value="1"/>
</dbReference>
<dbReference type="SUPFAM" id="SSF100950">
    <property type="entry name" value="NagB/RpiA/CoA transferase-like"/>
    <property type="match status" value="1"/>
</dbReference>
<dbReference type="PROSITE" id="PS01161">
    <property type="entry name" value="GLC_GALNAC_ISOMERASE"/>
    <property type="match status" value="1"/>
</dbReference>
<accession>B5R824</accession>
<feature type="chain" id="PRO_1000139787" description="Glucosamine-6-phosphate deaminase">
    <location>
        <begin position="1"/>
        <end position="266"/>
    </location>
</feature>
<feature type="active site" description="Proton acceptor; for enolization step" evidence="1">
    <location>
        <position position="72"/>
    </location>
</feature>
<feature type="active site" description="For ring-opening step" evidence="1">
    <location>
        <position position="141"/>
    </location>
</feature>
<feature type="active site" description="Proton acceptor; for ring-opening step" evidence="1">
    <location>
        <position position="143"/>
    </location>
</feature>
<feature type="active site" description="For ring-opening step" evidence="1">
    <location>
        <position position="148"/>
    </location>
</feature>
<feature type="site" description="Part of the allosteric site" evidence="1">
    <location>
        <position position="151"/>
    </location>
</feature>
<feature type="site" description="Part of the allosteric site" evidence="1">
    <location>
        <position position="158"/>
    </location>
</feature>
<feature type="site" description="Part of the allosteric site" evidence="1">
    <location>
        <position position="160"/>
    </location>
</feature>
<feature type="site" description="Part of the allosteric site" evidence="1">
    <location>
        <position position="161"/>
    </location>
</feature>
<feature type="site" description="Part of the allosteric site" evidence="1">
    <location>
        <position position="254"/>
    </location>
</feature>
<keyword id="KW-0021">Allosteric enzyme</keyword>
<keyword id="KW-0119">Carbohydrate metabolism</keyword>
<keyword id="KW-0378">Hydrolase</keyword>
<reference key="1">
    <citation type="journal article" date="2008" name="Genome Res.">
        <title>Comparative genome analysis of Salmonella enteritidis PT4 and Salmonella gallinarum 287/91 provides insights into evolutionary and host adaptation pathways.</title>
        <authorList>
            <person name="Thomson N.R."/>
            <person name="Clayton D.J."/>
            <person name="Windhorst D."/>
            <person name="Vernikos G."/>
            <person name="Davidson S."/>
            <person name="Churcher C."/>
            <person name="Quail M.A."/>
            <person name="Stevens M."/>
            <person name="Jones M.A."/>
            <person name="Watson M."/>
            <person name="Barron A."/>
            <person name="Layton A."/>
            <person name="Pickard D."/>
            <person name="Kingsley R.A."/>
            <person name="Bignell A."/>
            <person name="Clark L."/>
            <person name="Harris B."/>
            <person name="Ormond D."/>
            <person name="Abdellah Z."/>
            <person name="Brooks K."/>
            <person name="Cherevach I."/>
            <person name="Chillingworth T."/>
            <person name="Woodward J."/>
            <person name="Norberczak H."/>
            <person name="Lord A."/>
            <person name="Arrowsmith C."/>
            <person name="Jagels K."/>
            <person name="Moule S."/>
            <person name="Mungall K."/>
            <person name="Saunders M."/>
            <person name="Whitehead S."/>
            <person name="Chabalgoity J.A."/>
            <person name="Maskell D."/>
            <person name="Humphreys T."/>
            <person name="Roberts M."/>
            <person name="Barrow P.A."/>
            <person name="Dougan G."/>
            <person name="Parkhill J."/>
        </authorList>
    </citation>
    <scope>NUCLEOTIDE SEQUENCE [LARGE SCALE GENOMIC DNA]</scope>
    <source>
        <strain>287/91 / NCTC 13346</strain>
    </source>
</reference>
<name>NAGB_SALG2</name>
<comment type="function">
    <text evidence="1">Catalyzes the reversible isomerization-deamination of glucosamine 6-phosphate (GlcN6P) to form fructose 6-phosphate (Fru6P) and ammonium ion.</text>
</comment>
<comment type="catalytic activity">
    <reaction evidence="1">
        <text>alpha-D-glucosamine 6-phosphate + H2O = beta-D-fructose 6-phosphate + NH4(+)</text>
        <dbReference type="Rhea" id="RHEA:12172"/>
        <dbReference type="ChEBI" id="CHEBI:15377"/>
        <dbReference type="ChEBI" id="CHEBI:28938"/>
        <dbReference type="ChEBI" id="CHEBI:57634"/>
        <dbReference type="ChEBI" id="CHEBI:75989"/>
        <dbReference type="EC" id="3.5.99.6"/>
    </reaction>
</comment>
<comment type="activity regulation">
    <text evidence="1">Allosterically activated by N-acetylglucosamine 6-phosphate (GlcNAc6P).</text>
</comment>
<comment type="pathway">
    <text evidence="1">Amino-sugar metabolism; N-acetylneuraminate degradation; D-fructose 6-phosphate from N-acetylneuraminate: step 5/5.</text>
</comment>
<comment type="subunit">
    <text evidence="1">Homohexamer.</text>
</comment>
<comment type="similarity">
    <text evidence="1">Belongs to the glucosamine/galactosamine-6-phosphate isomerase family. NagB subfamily.</text>
</comment>
<evidence type="ECO:0000255" key="1">
    <source>
        <dbReference type="HAMAP-Rule" id="MF_01241"/>
    </source>
</evidence>